<gene>
    <name type="primary">yipf6</name>
    <name type="ORF">DDB_G0282825</name>
</gene>
<feature type="chain" id="PRO_0000330341" description="Protein YIPF6 homolog">
    <location>
        <begin position="1"/>
        <end position="182"/>
    </location>
</feature>
<feature type="topological domain" description="Cytoplasmic" evidence="1">
    <location>
        <begin position="1"/>
        <end position="45"/>
    </location>
</feature>
<feature type="transmembrane region" description="Helical" evidence="2">
    <location>
        <begin position="46"/>
        <end position="66"/>
    </location>
</feature>
<feature type="topological domain" description="Lumenal" evidence="3">
    <location>
        <begin position="67"/>
        <end position="70"/>
    </location>
</feature>
<feature type="transmembrane region" description="Helical" evidence="2">
    <location>
        <begin position="71"/>
        <end position="91"/>
    </location>
</feature>
<feature type="topological domain" description="Cytoplasmic" evidence="3">
    <location>
        <begin position="92"/>
        <end position="104"/>
    </location>
</feature>
<feature type="transmembrane region" description="Helical" evidence="2">
    <location>
        <begin position="105"/>
        <end position="125"/>
    </location>
</feature>
<feature type="topological domain" description="Lumenal" evidence="3">
    <location>
        <begin position="126"/>
        <end position="133"/>
    </location>
</feature>
<feature type="transmembrane region" description="Helical" evidence="2">
    <location>
        <begin position="134"/>
        <end position="154"/>
    </location>
</feature>
<feature type="topological domain" description="Cytoplasmic" evidence="3">
    <location>
        <begin position="155"/>
        <end position="161"/>
    </location>
</feature>
<feature type="transmembrane region" description="Helical" evidence="2">
    <location>
        <begin position="162"/>
        <end position="182"/>
    </location>
</feature>
<organism>
    <name type="scientific">Dictyostelium discoideum</name>
    <name type="common">Social amoeba</name>
    <dbReference type="NCBI Taxonomy" id="44689"/>
    <lineage>
        <taxon>Eukaryota</taxon>
        <taxon>Amoebozoa</taxon>
        <taxon>Evosea</taxon>
        <taxon>Eumycetozoa</taxon>
        <taxon>Dictyostelia</taxon>
        <taxon>Dictyosteliales</taxon>
        <taxon>Dictyosteliaceae</taxon>
        <taxon>Dictyostelium</taxon>
    </lineage>
</organism>
<accession>Q54RZ2</accession>
<comment type="subcellular location">
    <subcellularLocation>
        <location evidence="1">Golgi apparatus membrane</location>
        <topology evidence="1">Multi-pass membrane protein</topology>
    </subcellularLocation>
    <text evidence="1">Evenly distributed between cis- and trans-Golgi apparatus. Mainly localizes within medial-/trans-Golgi and trans-Golgi network (TGN), while less so within cis-Golgi.</text>
</comment>
<comment type="similarity">
    <text evidence="3">Belongs to the YIP1 family.</text>
</comment>
<reference key="1">
    <citation type="journal article" date="2005" name="Nature">
        <title>The genome of the social amoeba Dictyostelium discoideum.</title>
        <authorList>
            <person name="Eichinger L."/>
            <person name="Pachebat J.A."/>
            <person name="Gloeckner G."/>
            <person name="Rajandream M.A."/>
            <person name="Sucgang R."/>
            <person name="Berriman M."/>
            <person name="Song J."/>
            <person name="Olsen R."/>
            <person name="Szafranski K."/>
            <person name="Xu Q."/>
            <person name="Tunggal B."/>
            <person name="Kummerfeld S."/>
            <person name="Madera M."/>
            <person name="Konfortov B.A."/>
            <person name="Rivero F."/>
            <person name="Bankier A.T."/>
            <person name="Lehmann R."/>
            <person name="Hamlin N."/>
            <person name="Davies R."/>
            <person name="Gaudet P."/>
            <person name="Fey P."/>
            <person name="Pilcher K."/>
            <person name="Chen G."/>
            <person name="Saunders D."/>
            <person name="Sodergren E.J."/>
            <person name="Davis P."/>
            <person name="Kerhornou A."/>
            <person name="Nie X."/>
            <person name="Hall N."/>
            <person name="Anjard C."/>
            <person name="Hemphill L."/>
            <person name="Bason N."/>
            <person name="Farbrother P."/>
            <person name="Desany B."/>
            <person name="Just E."/>
            <person name="Morio T."/>
            <person name="Rost R."/>
            <person name="Churcher C.M."/>
            <person name="Cooper J."/>
            <person name="Haydock S."/>
            <person name="van Driessche N."/>
            <person name="Cronin A."/>
            <person name="Goodhead I."/>
            <person name="Muzny D.M."/>
            <person name="Mourier T."/>
            <person name="Pain A."/>
            <person name="Lu M."/>
            <person name="Harper D."/>
            <person name="Lindsay R."/>
            <person name="Hauser H."/>
            <person name="James K.D."/>
            <person name="Quiles M."/>
            <person name="Madan Babu M."/>
            <person name="Saito T."/>
            <person name="Buchrieser C."/>
            <person name="Wardroper A."/>
            <person name="Felder M."/>
            <person name="Thangavelu M."/>
            <person name="Johnson D."/>
            <person name="Knights A."/>
            <person name="Loulseged H."/>
            <person name="Mungall K.L."/>
            <person name="Oliver K."/>
            <person name="Price C."/>
            <person name="Quail M.A."/>
            <person name="Urushihara H."/>
            <person name="Hernandez J."/>
            <person name="Rabbinowitsch E."/>
            <person name="Steffen D."/>
            <person name="Sanders M."/>
            <person name="Ma J."/>
            <person name="Kohara Y."/>
            <person name="Sharp S."/>
            <person name="Simmonds M.N."/>
            <person name="Spiegler S."/>
            <person name="Tivey A."/>
            <person name="Sugano S."/>
            <person name="White B."/>
            <person name="Walker D."/>
            <person name="Woodward J.R."/>
            <person name="Winckler T."/>
            <person name="Tanaka Y."/>
            <person name="Shaulsky G."/>
            <person name="Schleicher M."/>
            <person name="Weinstock G.M."/>
            <person name="Rosenthal A."/>
            <person name="Cox E.C."/>
            <person name="Chisholm R.L."/>
            <person name="Gibbs R.A."/>
            <person name="Loomis W.F."/>
            <person name="Platzer M."/>
            <person name="Kay R.R."/>
            <person name="Williams J.G."/>
            <person name="Dear P.H."/>
            <person name="Noegel A.A."/>
            <person name="Barrell B.G."/>
            <person name="Kuspa A."/>
        </authorList>
    </citation>
    <scope>NUCLEOTIDE SEQUENCE [LARGE SCALE GENOMIC DNA]</scope>
    <source>
        <strain>AX4</strain>
    </source>
</reference>
<name>YIPF6_DICDI</name>
<keyword id="KW-0333">Golgi apparatus</keyword>
<keyword id="KW-0472">Membrane</keyword>
<keyword id="KW-1185">Reference proteome</keyword>
<keyword id="KW-0812">Transmembrane</keyword>
<keyword id="KW-1133">Transmembrane helix</keyword>
<dbReference type="EMBL" id="AAFI02000047">
    <property type="protein sequence ID" value="EAL65992.2"/>
    <property type="molecule type" value="Genomic_DNA"/>
</dbReference>
<dbReference type="RefSeq" id="XP_639345.2">
    <property type="nucleotide sequence ID" value="XM_634253.3"/>
</dbReference>
<dbReference type="FunCoup" id="Q54RZ2">
    <property type="interactions" value="516"/>
</dbReference>
<dbReference type="STRING" id="44689.Q54RZ2"/>
<dbReference type="PaxDb" id="44689-DDB0233687"/>
<dbReference type="GeneID" id="8623786"/>
<dbReference type="KEGG" id="ddi:DDB_G0282825"/>
<dbReference type="dictyBase" id="DDB_G0282825">
    <property type="gene designation" value="yipf6"/>
</dbReference>
<dbReference type="VEuPathDB" id="AmoebaDB:DDB_G0282825"/>
<dbReference type="eggNOG" id="KOG2946">
    <property type="taxonomic scope" value="Eukaryota"/>
</dbReference>
<dbReference type="HOGENOM" id="CLU_059592_3_0_1"/>
<dbReference type="InParanoid" id="Q54RZ2"/>
<dbReference type="OMA" id="VMAMFGW"/>
<dbReference type="PhylomeDB" id="Q54RZ2"/>
<dbReference type="PRO" id="PR:Q54RZ2"/>
<dbReference type="Proteomes" id="UP000002195">
    <property type="component" value="Chromosome 3"/>
</dbReference>
<dbReference type="GO" id="GO:0005797">
    <property type="term" value="C:Golgi medial cisterna"/>
    <property type="evidence" value="ECO:0000250"/>
    <property type="project" value="UniProtKB"/>
</dbReference>
<dbReference type="GO" id="GO:0000139">
    <property type="term" value="C:Golgi membrane"/>
    <property type="evidence" value="ECO:0007669"/>
    <property type="project" value="UniProtKB-SubCell"/>
</dbReference>
<dbReference type="GO" id="GO:0000138">
    <property type="term" value="C:Golgi trans cisterna"/>
    <property type="evidence" value="ECO:0000250"/>
    <property type="project" value="UniProtKB"/>
</dbReference>
<dbReference type="GO" id="GO:0005802">
    <property type="term" value="C:trans-Golgi network"/>
    <property type="evidence" value="ECO:0000250"/>
    <property type="project" value="UniProtKB"/>
</dbReference>
<dbReference type="GO" id="GO:0006888">
    <property type="term" value="P:endoplasmic reticulum to Golgi vesicle-mediated transport"/>
    <property type="evidence" value="ECO:0007669"/>
    <property type="project" value="InterPro"/>
</dbReference>
<dbReference type="InterPro" id="IPR045231">
    <property type="entry name" value="Yip1/4-like"/>
</dbReference>
<dbReference type="InterPro" id="IPR006977">
    <property type="entry name" value="Yip1_dom"/>
</dbReference>
<dbReference type="PANTHER" id="PTHR21236">
    <property type="entry name" value="GOLGI MEMBRANE PROTEIN YIP1"/>
    <property type="match status" value="1"/>
</dbReference>
<dbReference type="PANTHER" id="PTHR21236:SF1">
    <property type="entry name" value="PROTEIN YIPF6"/>
    <property type="match status" value="1"/>
</dbReference>
<dbReference type="Pfam" id="PF04893">
    <property type="entry name" value="Yip1"/>
    <property type="match status" value="1"/>
</dbReference>
<proteinExistence type="inferred from homology"/>
<protein>
    <recommendedName>
        <fullName>Protein YIPF6 homolog</fullName>
    </recommendedName>
</protein>
<evidence type="ECO:0000250" key="1">
    <source>
        <dbReference type="UniProtKB" id="Q96EC8"/>
    </source>
</evidence>
<evidence type="ECO:0000255" key="2"/>
<evidence type="ECO:0000305" key="3"/>
<sequence length="182" mass="20417">MIESENPNTLDEPVIQTILRDLKMIGFKLYHVILPRGNAANVLRDWDLWGPLILCLVMAIFLSISAEEQKALEFTIVFVVVWCGAAIVTVNGQLLCGNISFFQSVCILGYCIFPLTIATIIIWIIQNFTMIVKLPIVGGAWFWSSFASYGFLGSSVPESRRLLAVYPVLLFYLVIAWLVVVQ</sequence>